<protein>
    <recommendedName>
        <fullName evidence="1">ATP-dependent protease ATPase subunit HslU</fullName>
    </recommendedName>
    <alternativeName>
        <fullName evidence="1">Unfoldase HslU</fullName>
    </alternativeName>
</protein>
<reference key="1">
    <citation type="journal article" date="2002" name="Environ. Microbiol.">
        <title>Complete genome sequence and comparative analysis of the metabolically versatile Pseudomonas putida KT2440.</title>
        <authorList>
            <person name="Nelson K.E."/>
            <person name="Weinel C."/>
            <person name="Paulsen I.T."/>
            <person name="Dodson R.J."/>
            <person name="Hilbert H."/>
            <person name="Martins dos Santos V.A.P."/>
            <person name="Fouts D.E."/>
            <person name="Gill S.R."/>
            <person name="Pop M."/>
            <person name="Holmes M."/>
            <person name="Brinkac L.M."/>
            <person name="Beanan M.J."/>
            <person name="DeBoy R.T."/>
            <person name="Daugherty S.C."/>
            <person name="Kolonay J.F."/>
            <person name="Madupu R."/>
            <person name="Nelson W.C."/>
            <person name="White O."/>
            <person name="Peterson J.D."/>
            <person name="Khouri H.M."/>
            <person name="Hance I."/>
            <person name="Chris Lee P."/>
            <person name="Holtzapple E.K."/>
            <person name="Scanlan D."/>
            <person name="Tran K."/>
            <person name="Moazzez A."/>
            <person name="Utterback T.R."/>
            <person name="Rizzo M."/>
            <person name="Lee K."/>
            <person name="Kosack D."/>
            <person name="Moestl D."/>
            <person name="Wedler H."/>
            <person name="Lauber J."/>
            <person name="Stjepandic D."/>
            <person name="Hoheisel J."/>
            <person name="Straetz M."/>
            <person name="Heim S."/>
            <person name="Kiewitz C."/>
            <person name="Eisen J.A."/>
            <person name="Timmis K.N."/>
            <person name="Duesterhoeft A."/>
            <person name="Tuemmler B."/>
            <person name="Fraser C.M."/>
        </authorList>
    </citation>
    <scope>NUCLEOTIDE SEQUENCE [LARGE SCALE GENOMIC DNA]</scope>
    <source>
        <strain>ATCC 47054 / DSM 6125 / CFBP 8728 / NCIMB 11950 / KT2440</strain>
    </source>
</reference>
<proteinExistence type="inferred from homology"/>
<dbReference type="EMBL" id="AE015451">
    <property type="protein sequence ID" value="AAN70567.1"/>
    <property type="molecule type" value="Genomic_DNA"/>
</dbReference>
<dbReference type="RefSeq" id="NP_747103.1">
    <property type="nucleotide sequence ID" value="NC_002947.4"/>
</dbReference>
<dbReference type="RefSeq" id="WP_003249308.1">
    <property type="nucleotide sequence ID" value="NZ_CP169744.1"/>
</dbReference>
<dbReference type="SMR" id="Q88D27"/>
<dbReference type="STRING" id="160488.PP_5001"/>
<dbReference type="PaxDb" id="160488-PP_5001"/>
<dbReference type="GeneID" id="83682735"/>
<dbReference type="KEGG" id="ppu:PP_5001"/>
<dbReference type="PATRIC" id="fig|160488.4.peg.5342"/>
<dbReference type="eggNOG" id="COG1220">
    <property type="taxonomic scope" value="Bacteria"/>
</dbReference>
<dbReference type="HOGENOM" id="CLU_033123_0_0_6"/>
<dbReference type="OrthoDB" id="9804062at2"/>
<dbReference type="PhylomeDB" id="Q88D27"/>
<dbReference type="BioCyc" id="PPUT160488:G1G01-5346-MONOMER"/>
<dbReference type="Proteomes" id="UP000000556">
    <property type="component" value="Chromosome"/>
</dbReference>
<dbReference type="GO" id="GO:0009376">
    <property type="term" value="C:HslUV protease complex"/>
    <property type="evidence" value="ECO:0007669"/>
    <property type="project" value="UniProtKB-UniRule"/>
</dbReference>
<dbReference type="GO" id="GO:0005524">
    <property type="term" value="F:ATP binding"/>
    <property type="evidence" value="ECO:0007669"/>
    <property type="project" value="UniProtKB-UniRule"/>
</dbReference>
<dbReference type="GO" id="GO:0016887">
    <property type="term" value="F:ATP hydrolysis activity"/>
    <property type="evidence" value="ECO:0007669"/>
    <property type="project" value="InterPro"/>
</dbReference>
<dbReference type="GO" id="GO:0008233">
    <property type="term" value="F:peptidase activity"/>
    <property type="evidence" value="ECO:0007669"/>
    <property type="project" value="InterPro"/>
</dbReference>
<dbReference type="GO" id="GO:0036402">
    <property type="term" value="F:proteasome-activating activity"/>
    <property type="evidence" value="ECO:0007669"/>
    <property type="project" value="UniProtKB-UniRule"/>
</dbReference>
<dbReference type="GO" id="GO:0043335">
    <property type="term" value="P:protein unfolding"/>
    <property type="evidence" value="ECO:0007669"/>
    <property type="project" value="UniProtKB-UniRule"/>
</dbReference>
<dbReference type="GO" id="GO:0051603">
    <property type="term" value="P:proteolysis involved in protein catabolic process"/>
    <property type="evidence" value="ECO:0007669"/>
    <property type="project" value="TreeGrafter"/>
</dbReference>
<dbReference type="CDD" id="cd19498">
    <property type="entry name" value="RecA-like_HslU"/>
    <property type="match status" value="1"/>
</dbReference>
<dbReference type="FunFam" id="1.10.8.10:FF:000028">
    <property type="entry name" value="ATP-dependent protease ATPase subunit HslU"/>
    <property type="match status" value="1"/>
</dbReference>
<dbReference type="FunFam" id="3.40.50.300:FF:000213">
    <property type="entry name" value="ATP-dependent protease ATPase subunit HslU"/>
    <property type="match status" value="1"/>
</dbReference>
<dbReference type="FunFam" id="3.40.50.300:FF:000220">
    <property type="entry name" value="ATP-dependent protease ATPase subunit HslU"/>
    <property type="match status" value="1"/>
</dbReference>
<dbReference type="Gene3D" id="1.10.8.60">
    <property type="match status" value="1"/>
</dbReference>
<dbReference type="Gene3D" id="1.10.8.10">
    <property type="entry name" value="DNA helicase RuvA subunit, C-terminal domain"/>
    <property type="match status" value="2"/>
</dbReference>
<dbReference type="Gene3D" id="3.40.50.300">
    <property type="entry name" value="P-loop containing nucleotide triphosphate hydrolases"/>
    <property type="match status" value="2"/>
</dbReference>
<dbReference type="HAMAP" id="MF_00249">
    <property type="entry name" value="HslU"/>
    <property type="match status" value="1"/>
</dbReference>
<dbReference type="InterPro" id="IPR003593">
    <property type="entry name" value="AAA+_ATPase"/>
</dbReference>
<dbReference type="InterPro" id="IPR050052">
    <property type="entry name" value="ATP-dep_Clp_protease_ClpX"/>
</dbReference>
<dbReference type="InterPro" id="IPR003959">
    <property type="entry name" value="ATPase_AAA_core"/>
</dbReference>
<dbReference type="InterPro" id="IPR019489">
    <property type="entry name" value="Clp_ATPase_C"/>
</dbReference>
<dbReference type="InterPro" id="IPR004491">
    <property type="entry name" value="HslU"/>
</dbReference>
<dbReference type="InterPro" id="IPR027417">
    <property type="entry name" value="P-loop_NTPase"/>
</dbReference>
<dbReference type="NCBIfam" id="TIGR00390">
    <property type="entry name" value="hslU"/>
    <property type="match status" value="1"/>
</dbReference>
<dbReference type="NCBIfam" id="NF003544">
    <property type="entry name" value="PRK05201.1"/>
    <property type="match status" value="1"/>
</dbReference>
<dbReference type="PANTHER" id="PTHR48102">
    <property type="entry name" value="ATP-DEPENDENT CLP PROTEASE ATP-BINDING SUBUNIT CLPX-LIKE, MITOCHONDRIAL-RELATED"/>
    <property type="match status" value="1"/>
</dbReference>
<dbReference type="PANTHER" id="PTHR48102:SF3">
    <property type="entry name" value="ATP-DEPENDENT PROTEASE ATPASE SUBUNIT HSLU"/>
    <property type="match status" value="1"/>
</dbReference>
<dbReference type="Pfam" id="PF00004">
    <property type="entry name" value="AAA"/>
    <property type="match status" value="1"/>
</dbReference>
<dbReference type="Pfam" id="PF07724">
    <property type="entry name" value="AAA_2"/>
    <property type="match status" value="1"/>
</dbReference>
<dbReference type="SMART" id="SM00382">
    <property type="entry name" value="AAA"/>
    <property type="match status" value="1"/>
</dbReference>
<dbReference type="SMART" id="SM01086">
    <property type="entry name" value="ClpB_D2-small"/>
    <property type="match status" value="1"/>
</dbReference>
<dbReference type="SUPFAM" id="SSF52540">
    <property type="entry name" value="P-loop containing nucleoside triphosphate hydrolases"/>
    <property type="match status" value="1"/>
</dbReference>
<organism>
    <name type="scientific">Pseudomonas putida (strain ATCC 47054 / DSM 6125 / CFBP 8728 / NCIMB 11950 / KT2440)</name>
    <dbReference type="NCBI Taxonomy" id="160488"/>
    <lineage>
        <taxon>Bacteria</taxon>
        <taxon>Pseudomonadati</taxon>
        <taxon>Pseudomonadota</taxon>
        <taxon>Gammaproteobacteria</taxon>
        <taxon>Pseudomonadales</taxon>
        <taxon>Pseudomonadaceae</taxon>
        <taxon>Pseudomonas</taxon>
    </lineage>
</organism>
<accession>Q88D27</accession>
<comment type="function">
    <text evidence="1">ATPase subunit of a proteasome-like degradation complex; this subunit has chaperone activity. The binding of ATP and its subsequent hydrolysis by HslU are essential for unfolding of protein substrates subsequently hydrolyzed by HslV. HslU recognizes the N-terminal part of its protein substrates and unfolds these before they are guided to HslV for hydrolysis.</text>
</comment>
<comment type="subunit">
    <text evidence="1">A double ring-shaped homohexamer of HslV is capped on each side by a ring-shaped HslU homohexamer. The assembly of the HslU/HslV complex is dependent on binding of ATP.</text>
</comment>
<comment type="subcellular location">
    <subcellularLocation>
        <location evidence="1">Cytoplasm</location>
    </subcellularLocation>
</comment>
<comment type="similarity">
    <text evidence="1">Belongs to the ClpX chaperone family. HslU subfamily.</text>
</comment>
<name>HSLU_PSEPK</name>
<evidence type="ECO:0000255" key="1">
    <source>
        <dbReference type="HAMAP-Rule" id="MF_00249"/>
    </source>
</evidence>
<gene>
    <name evidence="1" type="primary">hslU</name>
    <name type="ordered locus">PP_5001</name>
</gene>
<feature type="chain" id="PRO_0000160532" description="ATP-dependent protease ATPase subunit HslU">
    <location>
        <begin position="1"/>
        <end position="447"/>
    </location>
</feature>
<feature type="binding site" evidence="1">
    <location>
        <position position="17"/>
    </location>
    <ligand>
        <name>ATP</name>
        <dbReference type="ChEBI" id="CHEBI:30616"/>
    </ligand>
</feature>
<feature type="binding site" evidence="1">
    <location>
        <begin position="59"/>
        <end position="64"/>
    </location>
    <ligand>
        <name>ATP</name>
        <dbReference type="ChEBI" id="CHEBI:30616"/>
    </ligand>
</feature>
<feature type="binding site" evidence="1">
    <location>
        <position position="256"/>
    </location>
    <ligand>
        <name>ATP</name>
        <dbReference type="ChEBI" id="CHEBI:30616"/>
    </ligand>
</feature>
<feature type="binding site" evidence="1">
    <location>
        <position position="321"/>
    </location>
    <ligand>
        <name>ATP</name>
        <dbReference type="ChEBI" id="CHEBI:30616"/>
    </ligand>
</feature>
<feature type="binding site" evidence="1">
    <location>
        <position position="393"/>
    </location>
    <ligand>
        <name>ATP</name>
        <dbReference type="ChEBI" id="CHEBI:30616"/>
    </ligand>
</feature>
<keyword id="KW-0067">ATP-binding</keyword>
<keyword id="KW-0143">Chaperone</keyword>
<keyword id="KW-0963">Cytoplasm</keyword>
<keyword id="KW-0547">Nucleotide-binding</keyword>
<keyword id="KW-1185">Reference proteome</keyword>
<sequence length="447" mass="49982">MSMTPREIVHELNRHIIGQDDAKRAVAIALRNRWRRMQLPAELRAEVTPKNILMIGPTGVGKTEIARRLAKLANAPFLKVEATKFTEVGYVGRDVESIIRDLADAALKMLREQEIIRVRHRAEDAAEDRILDALLPQARVTSFSEEAAQTSSDSNTRQLFRKRLREGQLDDKEIEIEVADAVGVEIAAPPGMEEMTNQLQSLFANMGKGKRKARKLKVKEALKMVRDEEASRLVNEEELKAKALEAVEQHGIVFIDEIDKVAKRGNVGGADVSREGVQRDLLPLIEGCTVNTKLGMVKTDHILFIASGAFHLSKPSDLVPELQGRLPIRVELKALTPEDFERILQEPHASLTEQYQALLKTEGLNIEFLADGIKRLAEIAYQVNEKTENIGARRLHTLLERLLEEVSFSAGDLASTHDEAPIQIDAAYVNSHLGELAQNEDLSRYIL</sequence>